<sequence length="380" mass="39956">MNTIVIAPDSFKESMTALQAARAIEKGFRRVIPNANYRLIPMADGGEGTVQSIVDALQGERKVVKVEGPLGDTVEAEYGLSGDRKIAVIEMAQASGLHLVPKEKRNPLWTSTYGTGQLLIDALDEGVEQIILGIGGSATNDGGAGMAQAVGVRLLKENGEPIGKGGGKLKELARIDMSKVDPRIQQVKLQVACDVDNPLVGEKGAAVVYGPQKGATRATIRELDEQLLHFANIIEEELGKEVASIPGAGAAGGLGAGLIAFLDAKLIPGVELVLQATNFHELVKDADFVITGEGRIDQQTVYGKTPIGVAKAAKQYGVPVIAIAGSLGQGYEAVFEHGIDAAFSLVPRIMSLDEAMQQGDSLLEQAARNIAVVSSWNKST</sequence>
<protein>
    <recommendedName>
        <fullName>Glycerate kinase</fullName>
        <ecNumber>2.7.1.31</ecNumber>
    </recommendedName>
</protein>
<evidence type="ECO:0000305" key="1"/>
<feature type="chain" id="PRO_0000071536" description="Glycerate kinase">
    <location>
        <begin position="1"/>
        <end position="380"/>
    </location>
</feature>
<keyword id="KW-0067">ATP-binding</keyword>
<keyword id="KW-0418">Kinase</keyword>
<keyword id="KW-0547">Nucleotide-binding</keyword>
<keyword id="KW-1185">Reference proteome</keyword>
<keyword id="KW-0808">Transferase</keyword>
<comment type="catalytic activity">
    <reaction>
        <text>(R)-glycerate + ATP = (2R)-3-phosphoglycerate + ADP + H(+)</text>
        <dbReference type="Rhea" id="RHEA:23516"/>
        <dbReference type="ChEBI" id="CHEBI:15378"/>
        <dbReference type="ChEBI" id="CHEBI:16659"/>
        <dbReference type="ChEBI" id="CHEBI:30616"/>
        <dbReference type="ChEBI" id="CHEBI:58272"/>
        <dbReference type="ChEBI" id="CHEBI:456216"/>
        <dbReference type="EC" id="2.7.1.31"/>
    </reaction>
</comment>
<comment type="similarity">
    <text evidence="1">Belongs to the glycerate kinase type-1 family.</text>
</comment>
<gene>
    <name type="primary">glxK</name>
    <name type="ordered locus">BH0555</name>
</gene>
<proteinExistence type="inferred from homology"/>
<name>GLXK_HALH5</name>
<accession>Q9Z9P2</accession>
<accession>Q9KFC9</accession>
<reference key="1">
    <citation type="journal article" date="2000" name="Nucleic Acids Res.">
        <title>Complete genome sequence of the alkaliphilic bacterium Bacillus halodurans and genomic sequence comparison with Bacillus subtilis.</title>
        <authorList>
            <person name="Takami H."/>
            <person name="Nakasone K."/>
            <person name="Takaki Y."/>
            <person name="Maeno G."/>
            <person name="Sasaki R."/>
            <person name="Masui N."/>
            <person name="Fuji F."/>
            <person name="Hirama C."/>
            <person name="Nakamura Y."/>
            <person name="Ogasawara N."/>
            <person name="Kuhara S."/>
            <person name="Horikoshi K."/>
        </authorList>
    </citation>
    <scope>NUCLEOTIDE SEQUENCE [LARGE SCALE GENOMIC DNA]</scope>
    <source>
        <strain>ATCC BAA-125 / DSM 18197 / FERM 7344 / JCM 9153 / C-125</strain>
    </source>
</reference>
<reference key="2">
    <citation type="journal article" date="1999" name="Extremophiles">
        <title>An improved physical and genetic map of the genome of alkaliphilic Bacillus sp. C-125.</title>
        <authorList>
            <person name="Takami H."/>
            <person name="Nakasone K."/>
            <person name="Hirama C."/>
            <person name="Takaki Y."/>
            <person name="Masui N."/>
            <person name="Fuji F."/>
            <person name="Nakamura Y."/>
            <person name="Inoue A."/>
        </authorList>
    </citation>
    <scope>NUCLEOTIDE SEQUENCE [GENOMIC DNA] OF 1-189</scope>
    <source>
        <strain>ATCC BAA-125 / DSM 18197 / FERM 7344 / JCM 9153 / C-125</strain>
    </source>
</reference>
<dbReference type="EC" id="2.7.1.31"/>
<dbReference type="EMBL" id="BA000004">
    <property type="protein sequence ID" value="BAB04274.1"/>
    <property type="molecule type" value="Genomic_DNA"/>
</dbReference>
<dbReference type="EMBL" id="AB013375">
    <property type="protein sequence ID" value="BAA75390.1"/>
    <property type="molecule type" value="Genomic_DNA"/>
</dbReference>
<dbReference type="PIR" id="C83719">
    <property type="entry name" value="C83719"/>
</dbReference>
<dbReference type="RefSeq" id="WP_010896732.1">
    <property type="nucleotide sequence ID" value="NC_002570.2"/>
</dbReference>
<dbReference type="SMR" id="Q9Z9P2"/>
<dbReference type="STRING" id="272558.gene:10726424"/>
<dbReference type="KEGG" id="bha:BH0555"/>
<dbReference type="eggNOG" id="COG1929">
    <property type="taxonomic scope" value="Bacteria"/>
</dbReference>
<dbReference type="HOGENOM" id="CLU_028255_0_1_9"/>
<dbReference type="OrthoDB" id="9774290at2"/>
<dbReference type="Proteomes" id="UP000001258">
    <property type="component" value="Chromosome"/>
</dbReference>
<dbReference type="GO" id="GO:0005524">
    <property type="term" value="F:ATP binding"/>
    <property type="evidence" value="ECO:0007669"/>
    <property type="project" value="UniProtKB-KW"/>
</dbReference>
<dbReference type="GO" id="GO:0008887">
    <property type="term" value="F:glycerate kinase activity"/>
    <property type="evidence" value="ECO:0007669"/>
    <property type="project" value="UniProtKB-EC"/>
</dbReference>
<dbReference type="GO" id="GO:0031388">
    <property type="term" value="P:organic acid phosphorylation"/>
    <property type="evidence" value="ECO:0007669"/>
    <property type="project" value="InterPro"/>
</dbReference>
<dbReference type="Gene3D" id="3.40.50.10350">
    <property type="entry name" value="Glycerate kinase, domain 1"/>
    <property type="match status" value="1"/>
</dbReference>
<dbReference type="Gene3D" id="3.90.1510.10">
    <property type="entry name" value="Glycerate kinase, domain 2"/>
    <property type="match status" value="1"/>
</dbReference>
<dbReference type="InterPro" id="IPR018193">
    <property type="entry name" value="Glyc_kinase_flavodox-like_fold"/>
</dbReference>
<dbReference type="InterPro" id="IPR004381">
    <property type="entry name" value="Glycerate_kinase"/>
</dbReference>
<dbReference type="InterPro" id="IPR018197">
    <property type="entry name" value="Glycerate_kinase_RE-like"/>
</dbReference>
<dbReference type="InterPro" id="IPR036129">
    <property type="entry name" value="Glycerate_kinase_sf"/>
</dbReference>
<dbReference type="NCBIfam" id="TIGR00045">
    <property type="entry name" value="glycerate kinase"/>
    <property type="match status" value="1"/>
</dbReference>
<dbReference type="PANTHER" id="PTHR21599">
    <property type="entry name" value="GLYCERATE KINASE"/>
    <property type="match status" value="1"/>
</dbReference>
<dbReference type="PANTHER" id="PTHR21599:SF0">
    <property type="entry name" value="GLYCERATE KINASE"/>
    <property type="match status" value="1"/>
</dbReference>
<dbReference type="Pfam" id="PF02595">
    <property type="entry name" value="Gly_kinase"/>
    <property type="match status" value="1"/>
</dbReference>
<dbReference type="PIRSF" id="PIRSF006078">
    <property type="entry name" value="GlxK"/>
    <property type="match status" value="1"/>
</dbReference>
<dbReference type="SUPFAM" id="SSF110738">
    <property type="entry name" value="Glycerate kinase I"/>
    <property type="match status" value="1"/>
</dbReference>
<organism>
    <name type="scientific">Halalkalibacterium halodurans (strain ATCC BAA-125 / DSM 18197 / FERM 7344 / JCM 9153 / C-125)</name>
    <name type="common">Bacillus halodurans</name>
    <dbReference type="NCBI Taxonomy" id="272558"/>
    <lineage>
        <taxon>Bacteria</taxon>
        <taxon>Bacillati</taxon>
        <taxon>Bacillota</taxon>
        <taxon>Bacilli</taxon>
        <taxon>Bacillales</taxon>
        <taxon>Bacillaceae</taxon>
        <taxon>Halalkalibacterium (ex Joshi et al. 2022)</taxon>
    </lineage>
</organism>